<gene>
    <name type="primary">rpsB</name>
    <name type="ordered locus">MT2958</name>
</gene>
<accession>P9WH38</accession>
<accession>L0TDV3</accession>
<accession>P66537</accession>
<accession>Q10796</accession>
<reference key="1">
    <citation type="journal article" date="2002" name="J. Bacteriol.">
        <title>Whole-genome comparison of Mycobacterium tuberculosis clinical and laboratory strains.</title>
        <authorList>
            <person name="Fleischmann R.D."/>
            <person name="Alland D."/>
            <person name="Eisen J.A."/>
            <person name="Carpenter L."/>
            <person name="White O."/>
            <person name="Peterson J.D."/>
            <person name="DeBoy R.T."/>
            <person name="Dodson R.J."/>
            <person name="Gwinn M.L."/>
            <person name="Haft D.H."/>
            <person name="Hickey E.K."/>
            <person name="Kolonay J.F."/>
            <person name="Nelson W.C."/>
            <person name="Umayam L.A."/>
            <person name="Ermolaeva M.D."/>
            <person name="Salzberg S.L."/>
            <person name="Delcher A."/>
            <person name="Utterback T.R."/>
            <person name="Weidman J.F."/>
            <person name="Khouri H.M."/>
            <person name="Gill J."/>
            <person name="Mikula A."/>
            <person name="Bishai W."/>
            <person name="Jacobs W.R. Jr."/>
            <person name="Venter J.C."/>
            <person name="Fraser C.M."/>
        </authorList>
    </citation>
    <scope>NUCLEOTIDE SEQUENCE [LARGE SCALE GENOMIC DNA]</scope>
    <source>
        <strain>CDC 1551 / Oshkosh</strain>
    </source>
</reference>
<keyword id="KW-1185">Reference proteome</keyword>
<keyword id="KW-0687">Ribonucleoprotein</keyword>
<keyword id="KW-0689">Ribosomal protein</keyword>
<proteinExistence type="inferred from homology"/>
<protein>
    <recommendedName>
        <fullName evidence="2">Small ribosomal subunit protein uS2</fullName>
    </recommendedName>
    <alternativeName>
        <fullName>30S ribosomal protein S2</fullName>
    </alternativeName>
</protein>
<comment type="similarity">
    <text evidence="2">Belongs to the universal ribosomal protein uS2 family.</text>
</comment>
<feature type="chain" id="PRO_0000428254" description="Small ribosomal subunit protein uS2">
    <location>
        <begin position="1"/>
        <end position="287"/>
    </location>
</feature>
<feature type="region of interest" description="Disordered" evidence="1">
    <location>
        <begin position="254"/>
        <end position="287"/>
    </location>
</feature>
<feature type="compositionally biased region" description="Low complexity" evidence="1">
    <location>
        <begin position="254"/>
        <end position="277"/>
    </location>
</feature>
<name>RS2_MYCTO</name>
<organism>
    <name type="scientific">Mycobacterium tuberculosis (strain CDC 1551 / Oshkosh)</name>
    <dbReference type="NCBI Taxonomy" id="83331"/>
    <lineage>
        <taxon>Bacteria</taxon>
        <taxon>Bacillati</taxon>
        <taxon>Actinomycetota</taxon>
        <taxon>Actinomycetes</taxon>
        <taxon>Mycobacteriales</taxon>
        <taxon>Mycobacteriaceae</taxon>
        <taxon>Mycobacterium</taxon>
        <taxon>Mycobacterium tuberculosis complex</taxon>
    </lineage>
</organism>
<dbReference type="EMBL" id="AE000516">
    <property type="protein sequence ID" value="AAK47283.1"/>
    <property type="molecule type" value="Genomic_DNA"/>
</dbReference>
<dbReference type="PIR" id="E70925">
    <property type="entry name" value="E70925"/>
</dbReference>
<dbReference type="RefSeq" id="WP_003899528.1">
    <property type="nucleotide sequence ID" value="NZ_KK341227.1"/>
</dbReference>
<dbReference type="SMR" id="P9WH38"/>
<dbReference type="GeneID" id="45426878"/>
<dbReference type="KEGG" id="mtc:MT2958"/>
<dbReference type="PATRIC" id="fig|83331.31.peg.3195"/>
<dbReference type="HOGENOM" id="CLU_040318_2_3_11"/>
<dbReference type="Proteomes" id="UP000001020">
    <property type="component" value="Chromosome"/>
</dbReference>
<dbReference type="GO" id="GO:0022627">
    <property type="term" value="C:cytosolic small ribosomal subunit"/>
    <property type="evidence" value="ECO:0007669"/>
    <property type="project" value="TreeGrafter"/>
</dbReference>
<dbReference type="GO" id="GO:0003735">
    <property type="term" value="F:structural constituent of ribosome"/>
    <property type="evidence" value="ECO:0007669"/>
    <property type="project" value="InterPro"/>
</dbReference>
<dbReference type="GO" id="GO:0006412">
    <property type="term" value="P:translation"/>
    <property type="evidence" value="ECO:0007669"/>
    <property type="project" value="UniProtKB-UniRule"/>
</dbReference>
<dbReference type="CDD" id="cd01425">
    <property type="entry name" value="RPS2"/>
    <property type="match status" value="1"/>
</dbReference>
<dbReference type="FunFam" id="1.10.287.610:FF:000001">
    <property type="entry name" value="30S ribosomal protein S2"/>
    <property type="match status" value="1"/>
</dbReference>
<dbReference type="Gene3D" id="3.40.50.10490">
    <property type="entry name" value="Glucose-6-phosphate isomerase like protein, domain 1"/>
    <property type="match status" value="1"/>
</dbReference>
<dbReference type="Gene3D" id="1.10.287.610">
    <property type="entry name" value="Helix hairpin bin"/>
    <property type="match status" value="1"/>
</dbReference>
<dbReference type="HAMAP" id="MF_00291_B">
    <property type="entry name" value="Ribosomal_uS2_B"/>
    <property type="match status" value="1"/>
</dbReference>
<dbReference type="InterPro" id="IPR001865">
    <property type="entry name" value="Ribosomal_uS2"/>
</dbReference>
<dbReference type="InterPro" id="IPR005706">
    <property type="entry name" value="Ribosomal_uS2_bac/mit/plastid"/>
</dbReference>
<dbReference type="InterPro" id="IPR018130">
    <property type="entry name" value="Ribosomal_uS2_CS"/>
</dbReference>
<dbReference type="InterPro" id="IPR023591">
    <property type="entry name" value="Ribosomal_uS2_flav_dom_sf"/>
</dbReference>
<dbReference type="NCBIfam" id="TIGR01011">
    <property type="entry name" value="rpsB_bact"/>
    <property type="match status" value="1"/>
</dbReference>
<dbReference type="PANTHER" id="PTHR12534">
    <property type="entry name" value="30S RIBOSOMAL PROTEIN S2 PROKARYOTIC AND ORGANELLAR"/>
    <property type="match status" value="1"/>
</dbReference>
<dbReference type="PANTHER" id="PTHR12534:SF0">
    <property type="entry name" value="SMALL RIBOSOMAL SUBUNIT PROTEIN US2M"/>
    <property type="match status" value="1"/>
</dbReference>
<dbReference type="Pfam" id="PF00318">
    <property type="entry name" value="Ribosomal_S2"/>
    <property type="match status" value="1"/>
</dbReference>
<dbReference type="PRINTS" id="PR00395">
    <property type="entry name" value="RIBOSOMALS2"/>
</dbReference>
<dbReference type="SUPFAM" id="SSF52313">
    <property type="entry name" value="Ribosomal protein S2"/>
    <property type="match status" value="1"/>
</dbReference>
<dbReference type="PROSITE" id="PS00962">
    <property type="entry name" value="RIBOSOMAL_S2_1"/>
    <property type="match status" value="1"/>
</dbReference>
<sequence length="287" mass="31089">MAVVTMKQLLDSGTHFGHQTRRWNPKMKRFIFTDRNGIYIIDLQQTLTFIDKAYEFVKETVAHGGSVLFVGTKKQAQESVAAEATRVGMPYVNQRWLGGMLTNFSTVHKRLQRLKELEAMEQTGGFEGRTKKEILGLTREKNKLERSLGGIRDMAKVPSAIWVVDTNKEHIAVGEARKLGIPVIAILDTNCDPDEVDYPIPGNDDAIRSAALLTRVIASAVAEGLQARAGLGRADGKPEAEAAEPLAEWEQELLASATASATPSATASTTALTDAPAGATEPTTDAS</sequence>
<evidence type="ECO:0000256" key="1">
    <source>
        <dbReference type="SAM" id="MobiDB-lite"/>
    </source>
</evidence>
<evidence type="ECO:0000305" key="2"/>